<reference key="1">
    <citation type="journal article" date="2005" name="Comp. Biochem. Physiol.">
        <title>Structure, gene expression, and evolution of primate glutathione peroxidases.</title>
        <authorList>
            <person name="Fukuhara R."/>
            <person name="Kageyama T."/>
        </authorList>
    </citation>
    <scope>NUCLEOTIDE SEQUENCE [MRNA]</scope>
</reference>
<reference key="2">
    <citation type="submission" date="2004-11" db="EMBL/GenBank/DDBJ databases">
        <authorList>
            <consortium name="The German cDNA consortium"/>
        </authorList>
    </citation>
    <scope>NUCLEOTIDE SEQUENCE [LARGE SCALE MRNA]</scope>
    <source>
        <tissue>Liver</tissue>
    </source>
</reference>
<proteinExistence type="evidence at transcript level"/>
<name>GPX2_PONPY</name>
<evidence type="ECO:0000250" key="1">
    <source>
        <dbReference type="UniProtKB" id="O70325"/>
    </source>
</evidence>
<evidence type="ECO:0000250" key="2">
    <source>
        <dbReference type="UniProtKB" id="P18283"/>
    </source>
</evidence>
<evidence type="ECO:0000305" key="3"/>
<organism>
    <name type="scientific">Pongo pygmaeus</name>
    <name type="common">Bornean orangutan</name>
    <dbReference type="NCBI Taxonomy" id="9600"/>
    <lineage>
        <taxon>Eukaryota</taxon>
        <taxon>Metazoa</taxon>
        <taxon>Chordata</taxon>
        <taxon>Craniata</taxon>
        <taxon>Vertebrata</taxon>
        <taxon>Euteleostomi</taxon>
        <taxon>Mammalia</taxon>
        <taxon>Eutheria</taxon>
        <taxon>Euarchontoglires</taxon>
        <taxon>Primates</taxon>
        <taxon>Haplorrhini</taxon>
        <taxon>Catarrhini</taxon>
        <taxon>Hominidae</taxon>
        <taxon>Pongo</taxon>
    </lineage>
</organism>
<gene>
    <name type="primary">GPX2</name>
</gene>
<sequence>MAFIAKSFYDLSAISLDGEKVDFNTFRGRAVLIENVASLUGTTTRDFTQLNELQCRFPRRLVVLGFPCNQFGHQENCQNEEILNSLKYVRPGSGYQPTFTLVQKCEVNGQNEHPVFAYLKDKLPYPYDDPFSLMTDPKLIIWSPVRRSDVAWNFEKFLIGPEGEPFRRYSRTFPTINIEPDIKRLLKVAI</sequence>
<comment type="function">
    <text evidence="2">Catalyzes the reduction of hydroperoxides in a glutathione-dependent manner thus regulating cellular redox homeostasis. Can reduce small soluble hydroperoxides such as H2O2, cumene hydroperoxide and tert-butyl hydroperoxide, as well as several fatty acid-derived hydroperoxides. Cannot reduce phosphatidycholine hydroperoxide.</text>
</comment>
<comment type="catalytic activity">
    <reaction evidence="2">
        <text>2 glutathione + H2O2 = glutathione disulfide + 2 H2O</text>
        <dbReference type="Rhea" id="RHEA:16833"/>
        <dbReference type="ChEBI" id="CHEBI:15377"/>
        <dbReference type="ChEBI" id="CHEBI:16240"/>
        <dbReference type="ChEBI" id="CHEBI:57925"/>
        <dbReference type="ChEBI" id="CHEBI:58297"/>
        <dbReference type="EC" id="1.11.1.9"/>
    </reaction>
    <physiologicalReaction direction="left-to-right" evidence="2">
        <dbReference type="Rhea" id="RHEA:16834"/>
    </physiologicalReaction>
</comment>
<comment type="catalytic activity">
    <reaction evidence="2">
        <text>a hydroperoxy polyunsaturated fatty acid + 2 glutathione = a hydroxy polyunsaturated fatty acid + glutathione disulfide + H2O</text>
        <dbReference type="Rhea" id="RHEA:19057"/>
        <dbReference type="ChEBI" id="CHEBI:15377"/>
        <dbReference type="ChEBI" id="CHEBI:57925"/>
        <dbReference type="ChEBI" id="CHEBI:58297"/>
        <dbReference type="ChEBI" id="CHEBI:131871"/>
        <dbReference type="ChEBI" id="CHEBI:134019"/>
        <dbReference type="EC" id="1.11.1.12"/>
    </reaction>
    <physiologicalReaction direction="left-to-right" evidence="2">
        <dbReference type="Rhea" id="RHEA:19058"/>
    </physiologicalReaction>
</comment>
<comment type="catalytic activity">
    <reaction evidence="2">
        <text>tert-butyl hydroperoxide + 2 glutathione = tert-butanol + glutathione disulfide + H2O</text>
        <dbReference type="Rhea" id="RHEA:69412"/>
        <dbReference type="ChEBI" id="CHEBI:15377"/>
        <dbReference type="ChEBI" id="CHEBI:45895"/>
        <dbReference type="ChEBI" id="CHEBI:57925"/>
        <dbReference type="ChEBI" id="CHEBI:58297"/>
        <dbReference type="ChEBI" id="CHEBI:64090"/>
    </reaction>
    <physiologicalReaction direction="left-to-right" evidence="2">
        <dbReference type="Rhea" id="RHEA:69413"/>
    </physiologicalReaction>
</comment>
<comment type="catalytic activity">
    <reaction evidence="2">
        <text>cumene hydroperoxide + 2 glutathione = 2-phenylpropan-2-ol + glutathione disulfide + H2O</text>
        <dbReference type="Rhea" id="RHEA:69651"/>
        <dbReference type="ChEBI" id="CHEBI:15377"/>
        <dbReference type="ChEBI" id="CHEBI:57925"/>
        <dbReference type="ChEBI" id="CHEBI:58297"/>
        <dbReference type="ChEBI" id="CHEBI:78673"/>
        <dbReference type="ChEBI" id="CHEBI:131607"/>
    </reaction>
    <physiologicalReaction direction="left-to-right" evidence="2">
        <dbReference type="Rhea" id="RHEA:69652"/>
    </physiologicalReaction>
</comment>
<comment type="catalytic activity">
    <reaction evidence="2">
        <text>(13S)-hydroperoxy-(9Z,11E)-octadecadienoate + 2 glutathione = (13S)-hydroxy-(9Z,11E)-octadecadienoate + glutathione disulfide + H2O</text>
        <dbReference type="Rhea" id="RHEA:48888"/>
        <dbReference type="ChEBI" id="CHEBI:15377"/>
        <dbReference type="ChEBI" id="CHEBI:57466"/>
        <dbReference type="ChEBI" id="CHEBI:57925"/>
        <dbReference type="ChEBI" id="CHEBI:58297"/>
        <dbReference type="ChEBI" id="CHEBI:90850"/>
    </reaction>
    <physiologicalReaction direction="left-to-right" evidence="2">
        <dbReference type="Rhea" id="RHEA:48889"/>
    </physiologicalReaction>
</comment>
<comment type="catalytic activity">
    <reaction evidence="2">
        <text>(5S)-hydroperoxy-(6E,8Z,11Z,14Z)-eicosatetraenoate + 2 glutathione = (5S)-hydroxy-(6E,8Z,11Z,14Z)-eicosatetraenoate + glutathione disulfide + H2O</text>
        <dbReference type="Rhea" id="RHEA:48620"/>
        <dbReference type="ChEBI" id="CHEBI:15377"/>
        <dbReference type="ChEBI" id="CHEBI:57450"/>
        <dbReference type="ChEBI" id="CHEBI:57925"/>
        <dbReference type="ChEBI" id="CHEBI:58297"/>
        <dbReference type="ChEBI" id="CHEBI:90632"/>
    </reaction>
    <physiologicalReaction direction="left-to-right" evidence="2">
        <dbReference type="Rhea" id="RHEA:48621"/>
    </physiologicalReaction>
</comment>
<comment type="catalytic activity">
    <reaction evidence="2">
        <text>(12R)-hydroperoxy-(5Z,8Z,10E,14Z)-eicosatetraenoate + 2 glutathione = (12R)-hydroxy-(5Z,8Z,10E,14Z)-eicosatetraenoate + glutathione disulfide + H2O</text>
        <dbReference type="Rhea" id="RHEA:76691"/>
        <dbReference type="ChEBI" id="CHEBI:15377"/>
        <dbReference type="ChEBI" id="CHEBI:57925"/>
        <dbReference type="ChEBI" id="CHEBI:58297"/>
        <dbReference type="ChEBI" id="CHEBI:75230"/>
        <dbReference type="ChEBI" id="CHEBI:83343"/>
    </reaction>
    <physiologicalReaction direction="left-to-right" evidence="2">
        <dbReference type="Rhea" id="RHEA:76692"/>
    </physiologicalReaction>
</comment>
<comment type="catalytic activity">
    <reaction evidence="2">
        <text>(15S)-hydroperoxy-(5Z,8Z,11Z,13E)-eicosatetraenoate + 2 glutathione = (15S)-hydroxy-(5Z,8Z,11Z,13E)-eicosatetraenoate + glutathione disulfide + H2O</text>
        <dbReference type="Rhea" id="RHEA:76695"/>
        <dbReference type="ChEBI" id="CHEBI:15377"/>
        <dbReference type="ChEBI" id="CHEBI:57409"/>
        <dbReference type="ChEBI" id="CHEBI:57446"/>
        <dbReference type="ChEBI" id="CHEBI:57925"/>
        <dbReference type="ChEBI" id="CHEBI:58297"/>
    </reaction>
    <physiologicalReaction direction="left-to-right" evidence="2">
        <dbReference type="Rhea" id="RHEA:76696"/>
    </physiologicalReaction>
</comment>
<comment type="subunit">
    <text evidence="2">Homotetramer.</text>
</comment>
<comment type="subcellular location">
    <subcellularLocation>
        <location evidence="2">Cytoplasm</location>
        <location evidence="2">Cytosol</location>
    </subcellularLocation>
</comment>
<comment type="similarity">
    <text evidence="3">Belongs to the glutathione peroxidase family.</text>
</comment>
<comment type="sequence caution" evidence="3">
    <conflict type="erroneous termination">
        <sequence resource="EMBL-CDS" id="CAH90226"/>
    </conflict>
    <text>Truncated C-terminus.</text>
</comment>
<comment type="sequence caution" evidence="3">
    <conflict type="frameshift">
        <sequence resource="EMBL-CDS" id="CAH90226"/>
    </conflict>
</comment>
<feature type="chain" id="PRO_0000066623" description="Glutathione peroxidase 2">
    <location>
        <begin position="1"/>
        <end position="190"/>
    </location>
</feature>
<feature type="active site" evidence="1">
    <location>
        <position position="40"/>
    </location>
</feature>
<feature type="non-standard amino acid" description="Selenocysteine" evidence="1">
    <location>
        <position position="40"/>
    </location>
</feature>
<keyword id="KW-0963">Cytoplasm</keyword>
<keyword id="KW-0560">Oxidoreductase</keyword>
<keyword id="KW-0575">Peroxidase</keyword>
<keyword id="KW-0712">Selenocysteine</keyword>
<dbReference type="EC" id="1.11.1.9" evidence="2"/>
<dbReference type="EC" id="1.11.1.12" evidence="2"/>
<dbReference type="EMBL" id="AB121001">
    <property type="protein sequence ID" value="BAE17010.1"/>
    <property type="molecule type" value="mRNA"/>
</dbReference>
<dbReference type="EMBL" id="CR857983">
    <property type="protein sequence ID" value="CAH90226.1"/>
    <property type="status" value="ALT_SEQ"/>
    <property type="molecule type" value="mRNA"/>
</dbReference>
<dbReference type="RefSeq" id="XP_054305883.1">
    <property type="nucleotide sequence ID" value="XM_054449908.2"/>
</dbReference>
<dbReference type="PeroxiBase" id="3726">
    <property type="entry name" value="PpyGPx02"/>
</dbReference>
<dbReference type="GeneID" id="129013340"/>
<dbReference type="KEGG" id="pon:100171975"/>
<dbReference type="GO" id="GO:0005829">
    <property type="term" value="C:cytosol"/>
    <property type="evidence" value="ECO:0007669"/>
    <property type="project" value="UniProtKB-SubCell"/>
</dbReference>
<dbReference type="GO" id="GO:0004602">
    <property type="term" value="F:glutathione peroxidase activity"/>
    <property type="evidence" value="ECO:0000250"/>
    <property type="project" value="UniProtKB"/>
</dbReference>
<dbReference type="GO" id="GO:0047066">
    <property type="term" value="F:phospholipid-hydroperoxide glutathione peroxidase activity"/>
    <property type="evidence" value="ECO:0007669"/>
    <property type="project" value="RHEA"/>
</dbReference>
<dbReference type="GO" id="GO:0006979">
    <property type="term" value="P:response to oxidative stress"/>
    <property type="evidence" value="ECO:0007669"/>
    <property type="project" value="InterPro"/>
</dbReference>
<dbReference type="CDD" id="cd00340">
    <property type="entry name" value="GSH_Peroxidase"/>
    <property type="match status" value="1"/>
</dbReference>
<dbReference type="FunFam" id="3.40.30.10:FF:000151">
    <property type="entry name" value="Glutathione peroxidase"/>
    <property type="match status" value="1"/>
</dbReference>
<dbReference type="Gene3D" id="3.40.30.10">
    <property type="entry name" value="Glutaredoxin"/>
    <property type="match status" value="1"/>
</dbReference>
<dbReference type="InterPro" id="IPR000889">
    <property type="entry name" value="Glutathione_peroxidase"/>
</dbReference>
<dbReference type="InterPro" id="IPR029759">
    <property type="entry name" value="GPX_AS"/>
</dbReference>
<dbReference type="InterPro" id="IPR029760">
    <property type="entry name" value="GPX_CS"/>
</dbReference>
<dbReference type="InterPro" id="IPR036249">
    <property type="entry name" value="Thioredoxin-like_sf"/>
</dbReference>
<dbReference type="PANTHER" id="PTHR11592">
    <property type="entry name" value="GLUTATHIONE PEROXIDASE"/>
    <property type="match status" value="1"/>
</dbReference>
<dbReference type="PANTHER" id="PTHR11592:SF36">
    <property type="entry name" value="GLUTATHIONE PEROXIDASE 2"/>
    <property type="match status" value="1"/>
</dbReference>
<dbReference type="Pfam" id="PF00255">
    <property type="entry name" value="GSHPx"/>
    <property type="match status" value="1"/>
</dbReference>
<dbReference type="PIRSF" id="PIRSF000303">
    <property type="entry name" value="Glutathion_perox"/>
    <property type="match status" value="1"/>
</dbReference>
<dbReference type="PRINTS" id="PR01011">
    <property type="entry name" value="GLUTPROXDASE"/>
</dbReference>
<dbReference type="SUPFAM" id="SSF52833">
    <property type="entry name" value="Thioredoxin-like"/>
    <property type="match status" value="1"/>
</dbReference>
<dbReference type="PROSITE" id="PS00460">
    <property type="entry name" value="GLUTATHIONE_PEROXID_1"/>
    <property type="match status" value="1"/>
</dbReference>
<dbReference type="PROSITE" id="PS00763">
    <property type="entry name" value="GLUTATHIONE_PEROXID_2"/>
    <property type="match status" value="1"/>
</dbReference>
<dbReference type="PROSITE" id="PS51355">
    <property type="entry name" value="GLUTATHIONE_PEROXID_3"/>
    <property type="match status" value="1"/>
</dbReference>
<accession>Q4AEI0</accession>
<accession>Q5RDD1</accession>
<protein>
    <recommendedName>
        <fullName>Glutathione peroxidase 2</fullName>
        <shortName>GPx-2</shortName>
        <shortName>GSHPx-2</shortName>
        <ecNumber evidence="2">1.11.1.9</ecNumber>
    </recommendedName>
    <alternativeName>
        <fullName>Glutathione peroxidase-gastrointestinal</fullName>
        <shortName>GPx-GI</shortName>
        <shortName>GSHPx-GI</shortName>
    </alternativeName>
    <alternativeName>
        <fullName>Phospholipid hydroperoxide glutathione peroxidase GPX2</fullName>
        <ecNumber evidence="2">1.11.1.12</ecNumber>
    </alternativeName>
</protein>